<reference key="1">
    <citation type="submission" date="2002-12" db="EMBL/GenBank/DDBJ databases">
        <title>Complete genome sequence of Vibrio vulnificus CMCP6.</title>
        <authorList>
            <person name="Rhee J.H."/>
            <person name="Kim S.Y."/>
            <person name="Chung S.S."/>
            <person name="Kim J.J."/>
            <person name="Moon Y.H."/>
            <person name="Jeong H."/>
            <person name="Choy H.E."/>
        </authorList>
    </citation>
    <scope>NUCLEOTIDE SEQUENCE [LARGE SCALE GENOMIC DNA]</scope>
    <source>
        <strain>CMCP6</strain>
    </source>
</reference>
<accession>Q8DEY6</accession>
<comment type="function">
    <text evidence="1">Regulates the transcription of several operons and genes involved in the biogenesis of Fe-S clusters and Fe-S-containing proteins.</text>
</comment>
<comment type="cofactor">
    <cofactor evidence="1">
        <name>[2Fe-2S] cluster</name>
        <dbReference type="ChEBI" id="CHEBI:190135"/>
    </cofactor>
    <text evidence="1">Binds 1 [2Fe-2S] cluster.</text>
</comment>
<comment type="sequence caution" evidence="2">
    <conflict type="erroneous initiation">
        <sequence resource="EMBL-CDS" id="AAO08962"/>
    </conflict>
    <text>Extended N-terminus.</text>
</comment>
<feature type="chain" id="PRO_0000268932" description="HTH-type transcriptional regulator IscR">
    <location>
        <begin position="1"/>
        <end position="168"/>
    </location>
</feature>
<feature type="domain" description="HTH rrf2-type" evidence="1">
    <location>
        <begin position="2"/>
        <end position="131"/>
    </location>
</feature>
<feature type="DNA-binding region" description="H-T-H motif" evidence="1">
    <location>
        <begin position="28"/>
        <end position="51"/>
    </location>
</feature>
<feature type="binding site" evidence="1">
    <location>
        <position position="92"/>
    </location>
    <ligand>
        <name>[2Fe-2S] cluster</name>
        <dbReference type="ChEBI" id="CHEBI:190135"/>
    </ligand>
</feature>
<feature type="binding site" evidence="1">
    <location>
        <position position="98"/>
    </location>
    <ligand>
        <name>[2Fe-2S] cluster</name>
        <dbReference type="ChEBI" id="CHEBI:190135"/>
    </ligand>
</feature>
<feature type="binding site" evidence="1">
    <location>
        <position position="104"/>
    </location>
    <ligand>
        <name>[2Fe-2S] cluster</name>
        <dbReference type="ChEBI" id="CHEBI:190135"/>
    </ligand>
</feature>
<sequence>MKLTSKGRYAVTAMLDVALHSQKSPVPLADISERQGISLSYLEQLFSKLRKAGLVASVRGPGGGYRLGADAFTISIGTVIAAVDESVDATKCQGKGDCQGGTRCLTHTLWRDLSSRITDFLNNITLGELMSDNEVIEISDRQDIDLAVNHGLANKTINTAPIGVNFRS</sequence>
<organism>
    <name type="scientific">Vibrio vulnificus (strain CMCP6)</name>
    <dbReference type="NCBI Taxonomy" id="216895"/>
    <lineage>
        <taxon>Bacteria</taxon>
        <taxon>Pseudomonadati</taxon>
        <taxon>Pseudomonadota</taxon>
        <taxon>Gammaproteobacteria</taxon>
        <taxon>Vibrionales</taxon>
        <taxon>Vibrionaceae</taxon>
        <taxon>Vibrio</taxon>
    </lineage>
</organism>
<name>ISCR_VIBVU</name>
<protein>
    <recommendedName>
        <fullName evidence="1">HTH-type transcriptional regulator IscR</fullName>
    </recommendedName>
</protein>
<gene>
    <name evidence="1" type="primary">iscR</name>
    <name type="ordered locus">VV1_0439</name>
</gene>
<keyword id="KW-0001">2Fe-2S</keyword>
<keyword id="KW-0010">Activator</keyword>
<keyword id="KW-0238">DNA-binding</keyword>
<keyword id="KW-0408">Iron</keyword>
<keyword id="KW-0411">Iron-sulfur</keyword>
<keyword id="KW-0479">Metal-binding</keyword>
<keyword id="KW-0678">Repressor</keyword>
<keyword id="KW-0804">Transcription</keyword>
<keyword id="KW-0805">Transcription regulation</keyword>
<proteinExistence type="inferred from homology"/>
<evidence type="ECO:0000255" key="1">
    <source>
        <dbReference type="HAMAP-Rule" id="MF_01176"/>
    </source>
</evidence>
<evidence type="ECO:0000305" key="2"/>
<dbReference type="EMBL" id="AE016795">
    <property type="protein sequence ID" value="AAO08962.2"/>
    <property type="status" value="ALT_INIT"/>
    <property type="molecule type" value="Genomic_DNA"/>
</dbReference>
<dbReference type="RefSeq" id="WP_013572351.1">
    <property type="nucleotide sequence ID" value="NC_004459.3"/>
</dbReference>
<dbReference type="SMR" id="Q8DEY6"/>
<dbReference type="GeneID" id="93894744"/>
<dbReference type="KEGG" id="vvu:VV1_0439"/>
<dbReference type="HOGENOM" id="CLU_107144_0_0_6"/>
<dbReference type="Proteomes" id="UP000002275">
    <property type="component" value="Chromosome 1"/>
</dbReference>
<dbReference type="GO" id="GO:0005829">
    <property type="term" value="C:cytosol"/>
    <property type="evidence" value="ECO:0007669"/>
    <property type="project" value="TreeGrafter"/>
</dbReference>
<dbReference type="GO" id="GO:0051537">
    <property type="term" value="F:2 iron, 2 sulfur cluster binding"/>
    <property type="evidence" value="ECO:0007669"/>
    <property type="project" value="UniProtKB-KW"/>
</dbReference>
<dbReference type="GO" id="GO:0003700">
    <property type="term" value="F:DNA-binding transcription factor activity"/>
    <property type="evidence" value="ECO:0007669"/>
    <property type="project" value="UniProtKB-UniRule"/>
</dbReference>
<dbReference type="GO" id="GO:0003690">
    <property type="term" value="F:double-stranded DNA binding"/>
    <property type="evidence" value="ECO:0007669"/>
    <property type="project" value="UniProtKB-UniRule"/>
</dbReference>
<dbReference type="GO" id="GO:0005506">
    <property type="term" value="F:iron ion binding"/>
    <property type="evidence" value="ECO:0007669"/>
    <property type="project" value="UniProtKB-UniRule"/>
</dbReference>
<dbReference type="FunFam" id="1.10.10.10:FF:000026">
    <property type="entry name" value="HTH-type transcriptional regulator IscR"/>
    <property type="match status" value="1"/>
</dbReference>
<dbReference type="Gene3D" id="1.10.10.10">
    <property type="entry name" value="Winged helix-like DNA-binding domain superfamily/Winged helix DNA-binding domain"/>
    <property type="match status" value="1"/>
</dbReference>
<dbReference type="HAMAP" id="MF_01176">
    <property type="entry name" value="HTH_type_IscR"/>
    <property type="match status" value="1"/>
</dbReference>
<dbReference type="InterPro" id="IPR010242">
    <property type="entry name" value="TF_HTH_IscR"/>
</dbReference>
<dbReference type="InterPro" id="IPR030489">
    <property type="entry name" value="TR_Rrf2-type_CS"/>
</dbReference>
<dbReference type="InterPro" id="IPR000944">
    <property type="entry name" value="Tscrpt_reg_Rrf2"/>
</dbReference>
<dbReference type="InterPro" id="IPR036388">
    <property type="entry name" value="WH-like_DNA-bd_sf"/>
</dbReference>
<dbReference type="InterPro" id="IPR036390">
    <property type="entry name" value="WH_DNA-bd_sf"/>
</dbReference>
<dbReference type="NCBIfam" id="TIGR02010">
    <property type="entry name" value="IscR"/>
    <property type="match status" value="1"/>
</dbReference>
<dbReference type="NCBIfam" id="NF008110">
    <property type="entry name" value="PRK10857.1"/>
    <property type="match status" value="1"/>
</dbReference>
<dbReference type="NCBIfam" id="TIGR00738">
    <property type="entry name" value="rrf2_super"/>
    <property type="match status" value="1"/>
</dbReference>
<dbReference type="PANTHER" id="PTHR33221:SF5">
    <property type="entry name" value="HTH-TYPE TRANSCRIPTIONAL REGULATOR ISCR"/>
    <property type="match status" value="1"/>
</dbReference>
<dbReference type="PANTHER" id="PTHR33221">
    <property type="entry name" value="WINGED HELIX-TURN-HELIX TRANSCRIPTIONAL REGULATOR, RRF2 FAMILY"/>
    <property type="match status" value="1"/>
</dbReference>
<dbReference type="Pfam" id="PF02082">
    <property type="entry name" value="Rrf2"/>
    <property type="match status" value="1"/>
</dbReference>
<dbReference type="SUPFAM" id="SSF46785">
    <property type="entry name" value="Winged helix' DNA-binding domain"/>
    <property type="match status" value="1"/>
</dbReference>
<dbReference type="PROSITE" id="PS01332">
    <property type="entry name" value="HTH_RRF2_1"/>
    <property type="match status" value="1"/>
</dbReference>
<dbReference type="PROSITE" id="PS51197">
    <property type="entry name" value="HTH_RRF2_2"/>
    <property type="match status" value="1"/>
</dbReference>